<proteinExistence type="inferred from homology"/>
<keyword id="KW-0028">Amino-acid biosynthesis</keyword>
<keyword id="KW-0057">Aromatic amino acid biosynthesis</keyword>
<keyword id="KW-0963">Cytoplasm</keyword>
<keyword id="KW-1185">Reference proteome</keyword>
<keyword id="KW-0808">Transferase</keyword>
<dbReference type="EC" id="2.5.1.19" evidence="1"/>
<dbReference type="EMBL" id="AE014299">
    <property type="protein sequence ID" value="AAN55438.1"/>
    <property type="molecule type" value="Genomic_DNA"/>
</dbReference>
<dbReference type="RefSeq" id="NP_717994.1">
    <property type="nucleotide sequence ID" value="NC_004347.2"/>
</dbReference>
<dbReference type="RefSeq" id="WP_011072383.1">
    <property type="nucleotide sequence ID" value="NC_004347.2"/>
</dbReference>
<dbReference type="SMR" id="Q8EEH8"/>
<dbReference type="STRING" id="211586.SO_2404"/>
<dbReference type="PaxDb" id="211586-SO_2404"/>
<dbReference type="KEGG" id="son:SO_2404"/>
<dbReference type="PATRIC" id="fig|211586.12.peg.2313"/>
<dbReference type="eggNOG" id="COG0128">
    <property type="taxonomic scope" value="Bacteria"/>
</dbReference>
<dbReference type="HOGENOM" id="CLU_024321_0_0_6"/>
<dbReference type="OrthoDB" id="9809920at2"/>
<dbReference type="PhylomeDB" id="Q8EEH8"/>
<dbReference type="BioCyc" id="SONE211586:G1GMP-2198-MONOMER"/>
<dbReference type="UniPathway" id="UPA00053">
    <property type="reaction ID" value="UER00089"/>
</dbReference>
<dbReference type="Proteomes" id="UP000008186">
    <property type="component" value="Chromosome"/>
</dbReference>
<dbReference type="GO" id="GO:0005737">
    <property type="term" value="C:cytoplasm"/>
    <property type="evidence" value="ECO:0007669"/>
    <property type="project" value="UniProtKB-SubCell"/>
</dbReference>
<dbReference type="GO" id="GO:0003866">
    <property type="term" value="F:3-phosphoshikimate 1-carboxyvinyltransferase activity"/>
    <property type="evidence" value="ECO:0000318"/>
    <property type="project" value="GO_Central"/>
</dbReference>
<dbReference type="GO" id="GO:0008652">
    <property type="term" value="P:amino acid biosynthetic process"/>
    <property type="evidence" value="ECO:0007669"/>
    <property type="project" value="UniProtKB-KW"/>
</dbReference>
<dbReference type="GO" id="GO:0009073">
    <property type="term" value="P:aromatic amino acid family biosynthetic process"/>
    <property type="evidence" value="ECO:0007669"/>
    <property type="project" value="UniProtKB-KW"/>
</dbReference>
<dbReference type="GO" id="GO:0009423">
    <property type="term" value="P:chorismate biosynthetic process"/>
    <property type="evidence" value="ECO:0000318"/>
    <property type="project" value="GO_Central"/>
</dbReference>
<dbReference type="CDD" id="cd01556">
    <property type="entry name" value="EPSP_synthase"/>
    <property type="match status" value="1"/>
</dbReference>
<dbReference type="FunFam" id="3.65.10.10:FF:000003">
    <property type="entry name" value="3-phosphoshikimate 1-carboxyvinyltransferase"/>
    <property type="match status" value="1"/>
</dbReference>
<dbReference type="FunFam" id="3.65.10.10:FF:000004">
    <property type="entry name" value="3-phosphoshikimate 1-carboxyvinyltransferase"/>
    <property type="match status" value="1"/>
</dbReference>
<dbReference type="Gene3D" id="3.65.10.10">
    <property type="entry name" value="Enolpyruvate transferase domain"/>
    <property type="match status" value="2"/>
</dbReference>
<dbReference type="HAMAP" id="MF_00210">
    <property type="entry name" value="EPSP_synth"/>
    <property type="match status" value="1"/>
</dbReference>
<dbReference type="InterPro" id="IPR001986">
    <property type="entry name" value="Enolpyruvate_Tfrase_dom"/>
</dbReference>
<dbReference type="InterPro" id="IPR036968">
    <property type="entry name" value="Enolpyruvate_Tfrase_sf"/>
</dbReference>
<dbReference type="InterPro" id="IPR006264">
    <property type="entry name" value="EPSP_synthase"/>
</dbReference>
<dbReference type="InterPro" id="IPR023193">
    <property type="entry name" value="EPSP_synthase_CS"/>
</dbReference>
<dbReference type="InterPro" id="IPR013792">
    <property type="entry name" value="RNA3'P_cycl/enolpyr_Trfase_a/b"/>
</dbReference>
<dbReference type="NCBIfam" id="TIGR01356">
    <property type="entry name" value="aroA"/>
    <property type="match status" value="1"/>
</dbReference>
<dbReference type="PANTHER" id="PTHR21090">
    <property type="entry name" value="AROM/DEHYDROQUINATE SYNTHASE"/>
    <property type="match status" value="1"/>
</dbReference>
<dbReference type="PANTHER" id="PTHR21090:SF5">
    <property type="entry name" value="PENTAFUNCTIONAL AROM POLYPEPTIDE"/>
    <property type="match status" value="1"/>
</dbReference>
<dbReference type="Pfam" id="PF00275">
    <property type="entry name" value="EPSP_synthase"/>
    <property type="match status" value="1"/>
</dbReference>
<dbReference type="PIRSF" id="PIRSF000505">
    <property type="entry name" value="EPSPS"/>
    <property type="match status" value="1"/>
</dbReference>
<dbReference type="SUPFAM" id="SSF55205">
    <property type="entry name" value="EPT/RTPC-like"/>
    <property type="match status" value="1"/>
</dbReference>
<dbReference type="PROSITE" id="PS00104">
    <property type="entry name" value="EPSP_SYNTHASE_1"/>
    <property type="match status" value="1"/>
</dbReference>
<dbReference type="PROSITE" id="PS00885">
    <property type="entry name" value="EPSP_SYNTHASE_2"/>
    <property type="match status" value="1"/>
</dbReference>
<organism>
    <name type="scientific">Shewanella oneidensis (strain ATCC 700550 / JCM 31522 / CIP 106686 / LMG 19005 / NCIMB 14063 / MR-1)</name>
    <dbReference type="NCBI Taxonomy" id="211586"/>
    <lineage>
        <taxon>Bacteria</taxon>
        <taxon>Pseudomonadati</taxon>
        <taxon>Pseudomonadota</taxon>
        <taxon>Gammaproteobacteria</taxon>
        <taxon>Alteromonadales</taxon>
        <taxon>Shewanellaceae</taxon>
        <taxon>Shewanella</taxon>
    </lineage>
</organism>
<feature type="chain" id="PRO_0000088287" description="3-phosphoshikimate 1-carboxyvinyltransferase">
    <location>
        <begin position="1"/>
        <end position="426"/>
    </location>
</feature>
<feature type="active site" description="Proton acceptor" evidence="1">
    <location>
        <position position="314"/>
    </location>
</feature>
<feature type="binding site" evidence="1">
    <location>
        <position position="22"/>
    </location>
    <ligand>
        <name>3-phosphoshikimate</name>
        <dbReference type="ChEBI" id="CHEBI:145989"/>
    </ligand>
</feature>
<feature type="binding site" evidence="1">
    <location>
        <position position="22"/>
    </location>
    <ligand>
        <name>phosphoenolpyruvate</name>
        <dbReference type="ChEBI" id="CHEBI:58702"/>
    </ligand>
</feature>
<feature type="binding site" evidence="1">
    <location>
        <position position="23"/>
    </location>
    <ligand>
        <name>3-phosphoshikimate</name>
        <dbReference type="ChEBI" id="CHEBI:145989"/>
    </ligand>
</feature>
<feature type="binding site" evidence="1">
    <location>
        <position position="27"/>
    </location>
    <ligand>
        <name>3-phosphoshikimate</name>
        <dbReference type="ChEBI" id="CHEBI:145989"/>
    </ligand>
</feature>
<feature type="binding site" evidence="1">
    <location>
        <position position="96"/>
    </location>
    <ligand>
        <name>phosphoenolpyruvate</name>
        <dbReference type="ChEBI" id="CHEBI:58702"/>
    </ligand>
</feature>
<feature type="binding site" evidence="1">
    <location>
        <position position="124"/>
    </location>
    <ligand>
        <name>phosphoenolpyruvate</name>
        <dbReference type="ChEBI" id="CHEBI:58702"/>
    </ligand>
</feature>
<feature type="binding site" evidence="1">
    <location>
        <position position="170"/>
    </location>
    <ligand>
        <name>3-phosphoshikimate</name>
        <dbReference type="ChEBI" id="CHEBI:145989"/>
    </ligand>
</feature>
<feature type="binding site" evidence="1">
    <location>
        <position position="171"/>
    </location>
    <ligand>
        <name>3-phosphoshikimate</name>
        <dbReference type="ChEBI" id="CHEBI:145989"/>
    </ligand>
</feature>
<feature type="binding site" evidence="1">
    <location>
        <position position="172"/>
    </location>
    <ligand>
        <name>3-phosphoshikimate</name>
        <dbReference type="ChEBI" id="CHEBI:145989"/>
    </ligand>
</feature>
<feature type="binding site" evidence="1">
    <location>
        <position position="172"/>
    </location>
    <ligand>
        <name>phosphoenolpyruvate</name>
        <dbReference type="ChEBI" id="CHEBI:58702"/>
    </ligand>
</feature>
<feature type="binding site" evidence="1">
    <location>
        <position position="198"/>
    </location>
    <ligand>
        <name>3-phosphoshikimate</name>
        <dbReference type="ChEBI" id="CHEBI:145989"/>
    </ligand>
</feature>
<feature type="binding site" evidence="1">
    <location>
        <position position="314"/>
    </location>
    <ligand>
        <name>3-phosphoshikimate</name>
        <dbReference type="ChEBI" id="CHEBI:145989"/>
    </ligand>
</feature>
<feature type="binding site" evidence="1">
    <location>
        <position position="337"/>
    </location>
    <ligand>
        <name>3-phosphoshikimate</name>
        <dbReference type="ChEBI" id="CHEBI:145989"/>
    </ligand>
</feature>
<feature type="binding site" evidence="1">
    <location>
        <position position="341"/>
    </location>
    <ligand>
        <name>3-phosphoshikimate</name>
        <dbReference type="ChEBI" id="CHEBI:145989"/>
    </ligand>
</feature>
<feature type="binding site" evidence="1">
    <location>
        <position position="345"/>
    </location>
    <ligand>
        <name>phosphoenolpyruvate</name>
        <dbReference type="ChEBI" id="CHEBI:58702"/>
    </ligand>
</feature>
<feature type="binding site" evidence="1">
    <location>
        <position position="387"/>
    </location>
    <ligand>
        <name>phosphoenolpyruvate</name>
        <dbReference type="ChEBI" id="CHEBI:58702"/>
    </ligand>
</feature>
<feature type="binding site" evidence="1">
    <location>
        <position position="412"/>
    </location>
    <ligand>
        <name>phosphoenolpyruvate</name>
        <dbReference type="ChEBI" id="CHEBI:58702"/>
    </ligand>
</feature>
<protein>
    <recommendedName>
        <fullName evidence="1">3-phosphoshikimate 1-carboxyvinyltransferase</fullName>
        <ecNumber evidence="1">2.5.1.19</ecNumber>
    </recommendedName>
    <alternativeName>
        <fullName evidence="1">5-enolpyruvylshikimate-3-phosphate synthase</fullName>
        <shortName evidence="1">EPSP synthase</shortName>
        <shortName evidence="1">EPSPS</shortName>
    </alternativeName>
</protein>
<gene>
    <name evidence="1" type="primary">aroA</name>
    <name type="ordered locus">SO_2404</name>
</gene>
<comment type="function">
    <text evidence="1">Catalyzes the transfer of the enolpyruvyl moiety of phosphoenolpyruvate (PEP) to the 5-hydroxyl of shikimate-3-phosphate (S3P) to produce enolpyruvyl shikimate-3-phosphate and inorganic phosphate.</text>
</comment>
<comment type="catalytic activity">
    <reaction evidence="1">
        <text>3-phosphoshikimate + phosphoenolpyruvate = 5-O-(1-carboxyvinyl)-3-phosphoshikimate + phosphate</text>
        <dbReference type="Rhea" id="RHEA:21256"/>
        <dbReference type="ChEBI" id="CHEBI:43474"/>
        <dbReference type="ChEBI" id="CHEBI:57701"/>
        <dbReference type="ChEBI" id="CHEBI:58702"/>
        <dbReference type="ChEBI" id="CHEBI:145989"/>
        <dbReference type="EC" id="2.5.1.19"/>
    </reaction>
    <physiologicalReaction direction="left-to-right" evidence="1">
        <dbReference type="Rhea" id="RHEA:21257"/>
    </physiologicalReaction>
</comment>
<comment type="pathway">
    <text evidence="1">Metabolic intermediate biosynthesis; chorismate biosynthesis; chorismate from D-erythrose 4-phosphate and phosphoenolpyruvate: step 6/7.</text>
</comment>
<comment type="subunit">
    <text evidence="1">Monomer.</text>
</comment>
<comment type="subcellular location">
    <subcellularLocation>
        <location evidence="1">Cytoplasm</location>
    </subcellularLocation>
</comment>
<comment type="similarity">
    <text evidence="1">Belongs to the EPSP synthase family.</text>
</comment>
<evidence type="ECO:0000255" key="1">
    <source>
        <dbReference type="HAMAP-Rule" id="MF_00210"/>
    </source>
</evidence>
<accession>Q8EEH8</accession>
<sequence length="426" mass="45773">MKQLRLEPVVQVRGEINIPGSKSISNRALLLATLAQGTTTLTNLLDSDDIRHMLASLKQLGVEYRLSHNNTVCELAGLGGVMSSKQAQTLFLGNAGTAMRPLCAALTLGQGEFTLTGEPRMEERPIGDLVDALRQLGANIVYLKNDGFPPLTINATGLNGGDVEIVGDLSSQFLTALLMVAPLAKGSVNIHVKGELVSKPYIDITLALMAQFGVKVINHHYARFEIPAGQHYVSPGKVLVEGDASSASYFLAAGAIKGGEVKVTGVGRLSIQGDVKFADVLEKMGADIEWGDDYIIARGAPLTAVDLDMNHIPDAAMTIATAALFAKGTTVIRNIYNWRIKETDRLAAMATELRKVGAEVEEGNDYIKITPPAVLNTAQIDTYNDHRMAMCFSMLAFADCGITINDPDCTSKTFPDYFVQFASLKV</sequence>
<name>AROA_SHEON</name>
<reference key="1">
    <citation type="journal article" date="2002" name="Nat. Biotechnol.">
        <title>Genome sequence of the dissimilatory metal ion-reducing bacterium Shewanella oneidensis.</title>
        <authorList>
            <person name="Heidelberg J.F."/>
            <person name="Paulsen I.T."/>
            <person name="Nelson K.E."/>
            <person name="Gaidos E.J."/>
            <person name="Nelson W.C."/>
            <person name="Read T.D."/>
            <person name="Eisen J.A."/>
            <person name="Seshadri R."/>
            <person name="Ward N.L."/>
            <person name="Methe B.A."/>
            <person name="Clayton R.A."/>
            <person name="Meyer T."/>
            <person name="Tsapin A."/>
            <person name="Scott J."/>
            <person name="Beanan M.J."/>
            <person name="Brinkac L.M."/>
            <person name="Daugherty S.C."/>
            <person name="DeBoy R.T."/>
            <person name="Dodson R.J."/>
            <person name="Durkin A.S."/>
            <person name="Haft D.H."/>
            <person name="Kolonay J.F."/>
            <person name="Madupu R."/>
            <person name="Peterson J.D."/>
            <person name="Umayam L.A."/>
            <person name="White O."/>
            <person name="Wolf A.M."/>
            <person name="Vamathevan J.J."/>
            <person name="Weidman J.F."/>
            <person name="Impraim M."/>
            <person name="Lee K."/>
            <person name="Berry K.J."/>
            <person name="Lee C."/>
            <person name="Mueller J."/>
            <person name="Khouri H.M."/>
            <person name="Gill J."/>
            <person name="Utterback T.R."/>
            <person name="McDonald L.A."/>
            <person name="Feldblyum T.V."/>
            <person name="Smith H.O."/>
            <person name="Venter J.C."/>
            <person name="Nealson K.H."/>
            <person name="Fraser C.M."/>
        </authorList>
    </citation>
    <scope>NUCLEOTIDE SEQUENCE [LARGE SCALE GENOMIC DNA]</scope>
    <source>
        <strain>ATCC 700550 / JCM 31522 / CIP 106686 / LMG 19005 / NCIMB 14063 / MR-1</strain>
    </source>
</reference>